<protein>
    <recommendedName>
        <fullName evidence="9">Transcription factor A, mitochondrial</fullName>
        <shortName>mtTFA</shortName>
    </recommendedName>
    <alternativeName>
        <fullName>Testis-specific high mobility group protein</fullName>
        <shortName>TS-HMG</shortName>
    </alternativeName>
</protein>
<comment type="function">
    <molecule>Isoform Mitochondrial</molecule>
    <text evidence="2 5 7">Binds to the mitochondrial light strand promoter and functions in mitochondrial transcription regulation (By similarity). Component of the mitochondrial transcription initiation complex, composed at least of TFB2M, TFAM and POLRMT that is required for basal transcription of mitochondrial DNA (By similarity). In this complex, TFAM recruits POLRMT to a specific promoter whereas TFB2M induces structural changes in POLRMT to enable promoter opening and trapping of the DNA non-template strand (By similarity). Required for accurate and efficient promoter recognition by the mitochondrial RNA polymerase (By similarity). Promotes transcription initiation from the HSP1 and the light strand promoter by binding immediately upstream of transcriptional start sites (By similarity). Is able to unwind DNA (By similarity). Bends the mitochondrial light strand promoter DNA into a U-turn shape via its HMG boxes (By similarity). Required for maintenance of normal levels of mitochondrial DNA (PubMed:9500544). May play a role in organizing and compacting mitochondrial DNA (PubMed:17581862).</text>
</comment>
<comment type="function">
    <molecule>Isoform Nuclear</molecule>
    <text evidence="6">May also function as a transcriptional activator or may have a structural role in the compaction of nuclear DNA during spermatogenesis.</text>
</comment>
<comment type="subunit">
    <text evidence="2">Monomer; binds DNA as a monomer. Homodimer. Component of the mitochondrial transcription initiation complex, composed at least of TFB2M, TFAM and POLRMT. In this complex TFAM recruits POLRMT to the promoter whereas TFB2M induces structural changes in POLRMT to enable promoter opening and trapping of the DNA non-template strand. Upon metabolic stress, forms a complex composed of FOXO3, SIRT3, TFAM and POLRMT. Interacts with TFB1M and TFB2M. Interacts with CLPX; this enhances DNA-binding.</text>
</comment>
<comment type="subcellular location">
    <molecule>Isoform Mitochondrial</molecule>
    <subcellularLocation>
        <location evidence="2">Mitochondrion</location>
    </subcellularLocation>
    <subcellularLocation>
        <location evidence="2">Mitochondrion matrix</location>
        <location evidence="2">Mitochondrion nucleoid</location>
    </subcellularLocation>
</comment>
<comment type="subcellular location">
    <molecule>Isoform Nuclear</molecule>
    <subcellularLocation>
        <location evidence="6">Nucleus</location>
    </subcellularLocation>
</comment>
<comment type="alternative products">
    <event type="alternative splicing"/>
    <isoform>
        <id>P40630-1</id>
        <name>Mitochondrial</name>
        <sequence type="displayed"/>
    </isoform>
    <isoform>
        <id>P40630-2</id>
        <name>Nuclear</name>
        <sequence type="described" ref="VSP_002185 VSP_002186"/>
    </isoform>
</comment>
<comment type="tissue specificity">
    <text>The mitochondrial isoform is widely expressed while the nuclear isoform is testis-specific.</text>
</comment>
<comment type="domain">
    <text evidence="1">Binds DNA via its HMG boxes. When bound to the mitochondrial light strand promoter, bends DNA into a U-turn shape, each HMG box bending the DNA by 90 degrees (By similarity).</text>
</comment>
<comment type="PTM">
    <text evidence="1">Phosphorylation by PKA within the HMG box 1 impairs DNA binding and promotes degradation by the AAA+ Lon protease.</text>
</comment>
<comment type="disruption phenotype">
    <text evidence="7">Embryonic lethal, due to absence of mitochondrial DNA. Mutant embryos die before 10.5 dpc.</text>
</comment>
<comment type="sequence caution" evidence="9">
    <conflict type="erroneous initiation">
        <sequence resource="EMBL-CDS" id="AAA02579"/>
    </conflict>
    <text>Truncated N-terminus.</text>
</comment>
<comment type="sequence caution" evidence="9">
    <conflict type="frameshift">
        <sequence resource="EMBL" id="AK004857"/>
    </conflict>
</comment>
<organism>
    <name type="scientific">Mus musculus</name>
    <name type="common">Mouse</name>
    <dbReference type="NCBI Taxonomy" id="10090"/>
    <lineage>
        <taxon>Eukaryota</taxon>
        <taxon>Metazoa</taxon>
        <taxon>Chordata</taxon>
        <taxon>Craniata</taxon>
        <taxon>Vertebrata</taxon>
        <taxon>Euteleostomi</taxon>
        <taxon>Mammalia</taxon>
        <taxon>Eutheria</taxon>
        <taxon>Euarchontoglires</taxon>
        <taxon>Glires</taxon>
        <taxon>Rodentia</taxon>
        <taxon>Myomorpha</taxon>
        <taxon>Muroidea</taxon>
        <taxon>Muridae</taxon>
        <taxon>Murinae</taxon>
        <taxon>Mus</taxon>
        <taxon>Mus</taxon>
    </lineage>
</organism>
<keyword id="KW-0010">Activator</keyword>
<keyword id="KW-0025">Alternative splicing</keyword>
<keyword id="KW-0238">DNA-binding</keyword>
<keyword id="KW-0496">Mitochondrion</keyword>
<keyword id="KW-1135">Mitochondrion nucleoid</keyword>
<keyword id="KW-0539">Nucleus</keyword>
<keyword id="KW-0597">Phosphoprotein</keyword>
<keyword id="KW-1185">Reference proteome</keyword>
<keyword id="KW-0677">Repeat</keyword>
<keyword id="KW-0804">Transcription</keyword>
<keyword id="KW-0805">Transcription regulation</keyword>
<keyword id="KW-0809">Transit peptide</keyword>
<sequence>MALFRGMWSVLKALGRTGVEMCAGCGGRIPSSISLVCIPKCFSSMGSYPKKPMSSYLRFSTEQLPKFKAKHPDAKLSELVRKIAALWRELPEAEKKVYEADFKAEWKAYKEAVSKYKEQLTPSQLMGMEKEARQRRLKKKALVKRRELILLGKPKRPRSAYNIYVSESFQEAKDDSAQGKLKLVNEAWKNLSPEEKQAYIQLAKDDRIRYDNEMKSWEEQMAEVGRSDLIRRSVKRSGDISEH</sequence>
<dbReference type="EMBL" id="U57939">
    <property type="protein sequence ID" value="AAC52815.1"/>
    <property type="molecule type" value="mRNA"/>
</dbReference>
<dbReference type="EMBL" id="U63858">
    <property type="protein sequence ID" value="AAC52816.1"/>
    <property type="molecule type" value="mRNA"/>
</dbReference>
<dbReference type="EMBL" id="BC001987">
    <property type="protein sequence ID" value="AAH01987.1"/>
    <property type="molecule type" value="mRNA"/>
</dbReference>
<dbReference type="EMBL" id="BC083084">
    <property type="protein sequence ID" value="AAH83084.1"/>
    <property type="molecule type" value="mRNA"/>
</dbReference>
<dbReference type="EMBL" id="AK004857">
    <property type="status" value="NOT_ANNOTATED_CDS"/>
    <property type="molecule type" value="mRNA"/>
</dbReference>
<dbReference type="EMBL" id="AK050446">
    <property type="protein sequence ID" value="BAC34258.1"/>
    <property type="molecule type" value="mRNA"/>
</dbReference>
<dbReference type="EMBL" id="AK167348">
    <property type="protein sequence ID" value="BAE39447.1"/>
    <property type="molecule type" value="mRNA"/>
</dbReference>
<dbReference type="EMBL" id="AK167777">
    <property type="protein sequence ID" value="BAE39809.1"/>
    <property type="molecule type" value="mRNA"/>
</dbReference>
<dbReference type="EMBL" id="AK169808">
    <property type="protein sequence ID" value="BAE41382.1"/>
    <property type="molecule type" value="mRNA"/>
</dbReference>
<dbReference type="EMBL" id="U63712">
    <property type="protein sequence ID" value="AAB06395.1"/>
    <property type="molecule type" value="mRNA"/>
</dbReference>
<dbReference type="EMBL" id="L07107">
    <property type="protein sequence ID" value="AAA02579.1"/>
    <property type="status" value="ALT_INIT"/>
    <property type="molecule type" value="mRNA"/>
</dbReference>
<dbReference type="CCDS" id="CCDS23916.1">
    <molecule id="P40630-1"/>
</dbReference>
<dbReference type="PIR" id="I49745">
    <property type="entry name" value="I49745"/>
</dbReference>
<dbReference type="RefSeq" id="NP_033386.1">
    <molecule id="P40630-1"/>
    <property type="nucleotide sequence ID" value="NM_009360.4"/>
</dbReference>
<dbReference type="SMR" id="P40630"/>
<dbReference type="BioGRID" id="204137">
    <property type="interactions" value="14"/>
</dbReference>
<dbReference type="FunCoup" id="P40630">
    <property type="interactions" value="3574"/>
</dbReference>
<dbReference type="IntAct" id="P40630">
    <property type="interactions" value="2"/>
</dbReference>
<dbReference type="STRING" id="10090.ENSMUSP00000090086"/>
<dbReference type="GlyGen" id="P40630">
    <property type="glycosylation" value="1 site, 1 N-linked glycan (1 site)"/>
</dbReference>
<dbReference type="iPTMnet" id="P40630"/>
<dbReference type="PhosphoSitePlus" id="P40630"/>
<dbReference type="PaxDb" id="10090-ENSMUSP00000090086"/>
<dbReference type="PeptideAtlas" id="P40630"/>
<dbReference type="ProteomicsDB" id="262881">
    <molecule id="P40630-1"/>
</dbReference>
<dbReference type="ProteomicsDB" id="262882">
    <molecule id="P40630-2"/>
</dbReference>
<dbReference type="Pumba" id="P40630"/>
<dbReference type="Antibodypedia" id="14209">
    <property type="antibodies" value="556 antibodies from 42 providers"/>
</dbReference>
<dbReference type="DNASU" id="21780"/>
<dbReference type="Ensembl" id="ENSMUST00000092430.11">
    <molecule id="P40630-1"/>
    <property type="protein sequence ID" value="ENSMUSP00000090086.5"/>
    <property type="gene ID" value="ENSMUSG00000003923.15"/>
</dbReference>
<dbReference type="Ensembl" id="ENSMUST00000105432.10">
    <molecule id="P40630-2"/>
    <property type="protein sequence ID" value="ENSMUSP00000101072.4"/>
    <property type="gene ID" value="ENSMUSG00000003923.15"/>
</dbReference>
<dbReference type="GeneID" id="21780"/>
<dbReference type="KEGG" id="mmu:21780"/>
<dbReference type="UCSC" id="uc007fol.1">
    <molecule id="P40630-2"/>
    <property type="organism name" value="mouse"/>
</dbReference>
<dbReference type="UCSC" id="uc007fom.1">
    <molecule id="P40630-1"/>
    <property type="organism name" value="mouse"/>
</dbReference>
<dbReference type="AGR" id="MGI:107810"/>
<dbReference type="CTD" id="7019"/>
<dbReference type="MGI" id="MGI:107810">
    <property type="gene designation" value="Tfam"/>
</dbReference>
<dbReference type="VEuPathDB" id="HostDB:ENSMUSG00000003923"/>
<dbReference type="eggNOG" id="KOG0381">
    <property type="taxonomic scope" value="Eukaryota"/>
</dbReference>
<dbReference type="GeneTree" id="ENSGT00440000039001"/>
<dbReference type="InParanoid" id="P40630"/>
<dbReference type="OMA" id="YMQLAED"/>
<dbReference type="OrthoDB" id="5550281at2759"/>
<dbReference type="PhylomeDB" id="P40630"/>
<dbReference type="TreeFam" id="TF318343"/>
<dbReference type="Reactome" id="R-MMU-163282">
    <property type="pathway name" value="Mitochondrial transcription initiation"/>
</dbReference>
<dbReference type="Reactome" id="R-MMU-9837999">
    <property type="pathway name" value="Mitochondrial protein degradation"/>
</dbReference>
<dbReference type="BioGRID-ORCS" id="21780">
    <property type="hits" value="18 hits in 82 CRISPR screens"/>
</dbReference>
<dbReference type="ChiTaRS" id="Tfam">
    <property type="organism name" value="mouse"/>
</dbReference>
<dbReference type="PRO" id="PR:P40630"/>
<dbReference type="Proteomes" id="UP000000589">
    <property type="component" value="Chromosome 10"/>
</dbReference>
<dbReference type="RNAct" id="P40630">
    <property type="molecule type" value="protein"/>
</dbReference>
<dbReference type="Bgee" id="ENSMUSG00000003923">
    <property type="expression patterns" value="Expressed in ventricular zone and 257 other cell types or tissues"/>
</dbReference>
<dbReference type="ExpressionAtlas" id="P40630">
    <property type="expression patterns" value="baseline and differential"/>
</dbReference>
<dbReference type="GO" id="GO:0042645">
    <property type="term" value="C:mitochondrial nucleoid"/>
    <property type="evidence" value="ECO:0000314"/>
    <property type="project" value="MGI"/>
</dbReference>
<dbReference type="GO" id="GO:0005739">
    <property type="term" value="C:mitochondrion"/>
    <property type="evidence" value="ECO:0000314"/>
    <property type="project" value="MGI"/>
</dbReference>
<dbReference type="GO" id="GO:0005634">
    <property type="term" value="C:nucleus"/>
    <property type="evidence" value="ECO:0007669"/>
    <property type="project" value="UniProtKB-SubCell"/>
</dbReference>
<dbReference type="GO" id="GO:0032991">
    <property type="term" value="C:protein-containing complex"/>
    <property type="evidence" value="ECO:0007669"/>
    <property type="project" value="Ensembl"/>
</dbReference>
<dbReference type="GO" id="GO:0003682">
    <property type="term" value="F:chromatin binding"/>
    <property type="evidence" value="ECO:0000250"/>
    <property type="project" value="UniProtKB"/>
</dbReference>
<dbReference type="GO" id="GO:0031072">
    <property type="term" value="F:heat shock protein binding"/>
    <property type="evidence" value="ECO:0007669"/>
    <property type="project" value="Ensembl"/>
</dbReference>
<dbReference type="GO" id="GO:0001018">
    <property type="term" value="F:mitochondrial promoter sequence-specific DNA binding"/>
    <property type="evidence" value="ECO:0000314"/>
    <property type="project" value="MGI"/>
</dbReference>
<dbReference type="GO" id="GO:0034246">
    <property type="term" value="F:mitochondrial transcription factor activity"/>
    <property type="evidence" value="ECO:0000250"/>
    <property type="project" value="UniProtKB"/>
</dbReference>
<dbReference type="GO" id="GO:0001223">
    <property type="term" value="F:transcription coactivator binding"/>
    <property type="evidence" value="ECO:0007669"/>
    <property type="project" value="Ensembl"/>
</dbReference>
<dbReference type="GO" id="GO:0033108">
    <property type="term" value="P:mitochondrial respiratory chain complex assembly"/>
    <property type="evidence" value="ECO:0000315"/>
    <property type="project" value="MGI"/>
</dbReference>
<dbReference type="GO" id="GO:0006390">
    <property type="term" value="P:mitochondrial transcription"/>
    <property type="evidence" value="ECO:0000314"/>
    <property type="project" value="MGI"/>
</dbReference>
<dbReference type="GO" id="GO:0045893">
    <property type="term" value="P:positive regulation of DNA-templated transcription"/>
    <property type="evidence" value="ECO:0000250"/>
    <property type="project" value="UniProtKB"/>
</dbReference>
<dbReference type="GO" id="GO:0001666">
    <property type="term" value="P:response to hypoxia"/>
    <property type="evidence" value="ECO:0007669"/>
    <property type="project" value="Ensembl"/>
</dbReference>
<dbReference type="GO" id="GO:0007584">
    <property type="term" value="P:response to nutrient"/>
    <property type="evidence" value="ECO:0007669"/>
    <property type="project" value="Ensembl"/>
</dbReference>
<dbReference type="GO" id="GO:0006391">
    <property type="term" value="P:transcription initiation at mitochondrial promoter"/>
    <property type="evidence" value="ECO:0000250"/>
    <property type="project" value="UniProtKB"/>
</dbReference>
<dbReference type="FunFam" id="1.10.30.10:FF:000043">
    <property type="entry name" value="Transcription factor A, mitochondrial"/>
    <property type="match status" value="1"/>
</dbReference>
<dbReference type="Gene3D" id="1.10.30.10">
    <property type="entry name" value="High mobility group box domain"/>
    <property type="match status" value="2"/>
</dbReference>
<dbReference type="InterPro" id="IPR009071">
    <property type="entry name" value="HMG_box_dom"/>
</dbReference>
<dbReference type="InterPro" id="IPR036910">
    <property type="entry name" value="HMG_box_dom_sf"/>
</dbReference>
<dbReference type="InterPro" id="IPR050342">
    <property type="entry name" value="HMGB"/>
</dbReference>
<dbReference type="PANTHER" id="PTHR48112">
    <property type="entry name" value="HIGH MOBILITY GROUP PROTEIN DSP1"/>
    <property type="match status" value="1"/>
</dbReference>
<dbReference type="PANTHER" id="PTHR48112:SF36">
    <property type="entry name" value="TRANSCRIPTION FACTOR A, MITOCHONDRIAL"/>
    <property type="match status" value="1"/>
</dbReference>
<dbReference type="Pfam" id="PF00505">
    <property type="entry name" value="HMG_box"/>
    <property type="match status" value="1"/>
</dbReference>
<dbReference type="Pfam" id="PF09011">
    <property type="entry name" value="HMG_box_2"/>
    <property type="match status" value="1"/>
</dbReference>
<dbReference type="SMART" id="SM00398">
    <property type="entry name" value="HMG"/>
    <property type="match status" value="2"/>
</dbReference>
<dbReference type="SUPFAM" id="SSF47095">
    <property type="entry name" value="HMG-box"/>
    <property type="match status" value="2"/>
</dbReference>
<dbReference type="PROSITE" id="PS50118">
    <property type="entry name" value="HMG_BOX_2"/>
    <property type="match status" value="2"/>
</dbReference>
<reference key="1">
    <citation type="journal article" date="1996" name="Nat. Genet.">
        <title>A single mouse gene encodes the mitochondrial transcription factor A and a testis-specific nuclear HMG-box protein.</title>
        <authorList>
            <person name="Larsson N.G."/>
            <person name="Garman J.D."/>
            <person name="Oldfors A."/>
            <person name="Barsh G.S."/>
            <person name="Clayton D.A."/>
        </authorList>
    </citation>
    <scope>NUCLEOTIDE SEQUENCE [MRNA] (ISOFORMS MITOCHONDRIAL AND NUCLEAR)</scope>
    <scope>FUNCTION</scope>
    <scope>ALTERNATIVE SPLICING</scope>
    <scope>SUBCELLULAR LOCATION</scope>
    <source>
        <tissue>Lymphocyte</tissue>
        <tissue>Testis</tissue>
    </source>
</reference>
<reference key="2">
    <citation type="journal article" date="2004" name="Genome Res.">
        <title>The status, quality, and expansion of the NIH full-length cDNA project: the Mammalian Gene Collection (MGC).</title>
        <authorList>
            <consortium name="The MGC Project Team"/>
        </authorList>
    </citation>
    <scope>NUCLEOTIDE SEQUENCE [LARGE SCALE MRNA] (ISOFORM MITOCHONDRIAL)</scope>
</reference>
<reference key="3">
    <citation type="journal article" date="2005" name="Science">
        <title>The transcriptional landscape of the mammalian genome.</title>
        <authorList>
            <person name="Carninci P."/>
            <person name="Kasukawa T."/>
            <person name="Katayama S."/>
            <person name="Gough J."/>
            <person name="Frith M.C."/>
            <person name="Maeda N."/>
            <person name="Oyama R."/>
            <person name="Ravasi T."/>
            <person name="Lenhard B."/>
            <person name="Wells C."/>
            <person name="Kodzius R."/>
            <person name="Shimokawa K."/>
            <person name="Bajic V.B."/>
            <person name="Brenner S.E."/>
            <person name="Batalov S."/>
            <person name="Forrest A.R."/>
            <person name="Zavolan M."/>
            <person name="Davis M.J."/>
            <person name="Wilming L.G."/>
            <person name="Aidinis V."/>
            <person name="Allen J.E."/>
            <person name="Ambesi-Impiombato A."/>
            <person name="Apweiler R."/>
            <person name="Aturaliya R.N."/>
            <person name="Bailey T.L."/>
            <person name="Bansal M."/>
            <person name="Baxter L."/>
            <person name="Beisel K.W."/>
            <person name="Bersano T."/>
            <person name="Bono H."/>
            <person name="Chalk A.M."/>
            <person name="Chiu K.P."/>
            <person name="Choudhary V."/>
            <person name="Christoffels A."/>
            <person name="Clutterbuck D.R."/>
            <person name="Crowe M.L."/>
            <person name="Dalla E."/>
            <person name="Dalrymple B.P."/>
            <person name="de Bono B."/>
            <person name="Della Gatta G."/>
            <person name="di Bernardo D."/>
            <person name="Down T."/>
            <person name="Engstrom P."/>
            <person name="Fagiolini M."/>
            <person name="Faulkner G."/>
            <person name="Fletcher C.F."/>
            <person name="Fukushima T."/>
            <person name="Furuno M."/>
            <person name="Futaki S."/>
            <person name="Gariboldi M."/>
            <person name="Georgii-Hemming P."/>
            <person name="Gingeras T.R."/>
            <person name="Gojobori T."/>
            <person name="Green R.E."/>
            <person name="Gustincich S."/>
            <person name="Harbers M."/>
            <person name="Hayashi Y."/>
            <person name="Hensch T.K."/>
            <person name="Hirokawa N."/>
            <person name="Hill D."/>
            <person name="Huminiecki L."/>
            <person name="Iacono M."/>
            <person name="Ikeo K."/>
            <person name="Iwama A."/>
            <person name="Ishikawa T."/>
            <person name="Jakt M."/>
            <person name="Kanapin A."/>
            <person name="Katoh M."/>
            <person name="Kawasawa Y."/>
            <person name="Kelso J."/>
            <person name="Kitamura H."/>
            <person name="Kitano H."/>
            <person name="Kollias G."/>
            <person name="Krishnan S.P."/>
            <person name="Kruger A."/>
            <person name="Kummerfeld S.K."/>
            <person name="Kurochkin I.V."/>
            <person name="Lareau L.F."/>
            <person name="Lazarevic D."/>
            <person name="Lipovich L."/>
            <person name="Liu J."/>
            <person name="Liuni S."/>
            <person name="McWilliam S."/>
            <person name="Madan Babu M."/>
            <person name="Madera M."/>
            <person name="Marchionni L."/>
            <person name="Matsuda H."/>
            <person name="Matsuzawa S."/>
            <person name="Miki H."/>
            <person name="Mignone F."/>
            <person name="Miyake S."/>
            <person name="Morris K."/>
            <person name="Mottagui-Tabar S."/>
            <person name="Mulder N."/>
            <person name="Nakano N."/>
            <person name="Nakauchi H."/>
            <person name="Ng P."/>
            <person name="Nilsson R."/>
            <person name="Nishiguchi S."/>
            <person name="Nishikawa S."/>
            <person name="Nori F."/>
            <person name="Ohara O."/>
            <person name="Okazaki Y."/>
            <person name="Orlando V."/>
            <person name="Pang K.C."/>
            <person name="Pavan W.J."/>
            <person name="Pavesi G."/>
            <person name="Pesole G."/>
            <person name="Petrovsky N."/>
            <person name="Piazza S."/>
            <person name="Reed J."/>
            <person name="Reid J.F."/>
            <person name="Ring B.Z."/>
            <person name="Ringwald M."/>
            <person name="Rost B."/>
            <person name="Ruan Y."/>
            <person name="Salzberg S.L."/>
            <person name="Sandelin A."/>
            <person name="Schneider C."/>
            <person name="Schoenbach C."/>
            <person name="Sekiguchi K."/>
            <person name="Semple C.A."/>
            <person name="Seno S."/>
            <person name="Sessa L."/>
            <person name="Sheng Y."/>
            <person name="Shibata Y."/>
            <person name="Shimada H."/>
            <person name="Shimada K."/>
            <person name="Silva D."/>
            <person name="Sinclair B."/>
            <person name="Sperling S."/>
            <person name="Stupka E."/>
            <person name="Sugiura K."/>
            <person name="Sultana R."/>
            <person name="Takenaka Y."/>
            <person name="Taki K."/>
            <person name="Tammoja K."/>
            <person name="Tan S.L."/>
            <person name="Tang S."/>
            <person name="Taylor M.S."/>
            <person name="Tegner J."/>
            <person name="Teichmann S.A."/>
            <person name="Ueda H.R."/>
            <person name="van Nimwegen E."/>
            <person name="Verardo R."/>
            <person name="Wei C.L."/>
            <person name="Yagi K."/>
            <person name="Yamanishi H."/>
            <person name="Zabarovsky E."/>
            <person name="Zhu S."/>
            <person name="Zimmer A."/>
            <person name="Hide W."/>
            <person name="Bult C."/>
            <person name="Grimmond S.M."/>
            <person name="Teasdale R.D."/>
            <person name="Liu E.T."/>
            <person name="Brusic V."/>
            <person name="Quackenbush J."/>
            <person name="Wahlestedt C."/>
            <person name="Mattick J.S."/>
            <person name="Hume D.A."/>
            <person name="Kai C."/>
            <person name="Sasaki D."/>
            <person name="Tomaru Y."/>
            <person name="Fukuda S."/>
            <person name="Kanamori-Katayama M."/>
            <person name="Suzuki M."/>
            <person name="Aoki J."/>
            <person name="Arakawa T."/>
            <person name="Iida J."/>
            <person name="Imamura K."/>
            <person name="Itoh M."/>
            <person name="Kato T."/>
            <person name="Kawaji H."/>
            <person name="Kawagashira N."/>
            <person name="Kawashima T."/>
            <person name="Kojima M."/>
            <person name="Kondo S."/>
            <person name="Konno H."/>
            <person name="Nakano K."/>
            <person name="Ninomiya N."/>
            <person name="Nishio T."/>
            <person name="Okada M."/>
            <person name="Plessy C."/>
            <person name="Shibata K."/>
            <person name="Shiraki T."/>
            <person name="Suzuki S."/>
            <person name="Tagami M."/>
            <person name="Waki K."/>
            <person name="Watahiki A."/>
            <person name="Okamura-Oho Y."/>
            <person name="Suzuki H."/>
            <person name="Kawai J."/>
            <person name="Hayashizaki Y."/>
        </authorList>
    </citation>
    <scope>NUCLEOTIDE SEQUENCE [LARGE SCALE MRNA] (ISOFORM MITOCHONDRIAL)</scope>
    <source>
        <strain>C57BL/6J</strain>
        <strain>DBA/2J</strain>
        <strain>NOD</strain>
        <tissue>Liver</tissue>
        <tissue>Thymus</tissue>
    </source>
</reference>
<reference key="4">
    <citation type="submission" date="1996-08" db="EMBL/GenBank/DDBJ databases">
        <authorList>
            <person name="Cermakian N."/>
            <person name="Cedergren R."/>
        </authorList>
    </citation>
    <scope>NUCLEOTIDE SEQUENCE [MRNA] OF 1-48 (ISOFORM MITOCHONDRIAL)</scope>
    <source>
        <strain>CD-1</strain>
        <tissue>Testis</tissue>
    </source>
</reference>
<reference key="5">
    <citation type="journal article" date="1993" name="Mol. Cell. Biol.">
        <title>A testis-specific gene encoding a nuclear high-mobility-group box protein located in elongating spermatids.</title>
        <authorList>
            <person name="Boissonneault G."/>
            <person name="Lau Y.-F.C."/>
        </authorList>
    </citation>
    <scope>NUCLEOTIDE SEQUENCE [MRNA] OF 34-243 (ISOFORM MITOCHONDRIAL)</scope>
    <source>
        <strain>BALB/cJ</strain>
        <tissue>Testis</tissue>
    </source>
</reference>
<reference key="6">
    <citation type="journal article" date="1998" name="Nat. Genet.">
        <title>Mitochondrial transcription factor A is necessary for mtDNA maintenance and embryogenesis in mice.</title>
        <authorList>
            <person name="Larsson N.G."/>
            <person name="Wang J."/>
            <person name="Wilhelmsson H."/>
            <person name="Oldfors A."/>
            <person name="Rustin P."/>
            <person name="Lewandoski M."/>
            <person name="Barsh G.S."/>
            <person name="Clayton D.A."/>
        </authorList>
    </citation>
    <scope>FUNCTION</scope>
    <scope>DISRUPTION PHENOTYPE</scope>
</reference>
<reference key="7">
    <citation type="journal article" date="2007" name="Mol. Biol. Cell">
        <title>The mitochondrial transcription factor TFAM coordinates the assembly of multiple DNA molecules into nucleoid-like structures.</title>
        <authorList>
            <person name="Kaufman B.A."/>
            <person name="Durisic N."/>
            <person name="Mativetsky J.M."/>
            <person name="Costantino S."/>
            <person name="Hancock M.A."/>
            <person name="Grutter P."/>
            <person name="Shoubridge E.A."/>
        </authorList>
    </citation>
    <scope>FUNCTION</scope>
    <scope>SUBUNIT</scope>
</reference>
<reference key="8">
    <citation type="journal article" date="2010" name="Cell">
        <title>A tissue-specific atlas of mouse protein phosphorylation and expression.</title>
        <authorList>
            <person name="Huttlin E.L."/>
            <person name="Jedrychowski M.P."/>
            <person name="Elias J.E."/>
            <person name="Goswami T."/>
            <person name="Rad R."/>
            <person name="Beausoleil S.A."/>
            <person name="Villen J."/>
            <person name="Haas W."/>
            <person name="Sowa M.E."/>
            <person name="Gygi S.P."/>
        </authorList>
    </citation>
    <scope>IDENTIFICATION BY MASS SPECTROMETRY [LARGE SCALE ANALYSIS]</scope>
    <source>
        <tissue>Brain</tissue>
        <tissue>Brown adipose tissue</tissue>
        <tissue>Heart</tissue>
        <tissue>Kidney</tissue>
        <tissue>Liver</tissue>
        <tissue>Lung</tissue>
    </source>
</reference>
<reference key="9">
    <citation type="journal article" date="2013" name="Mol. Cell">
        <title>SIRT5-mediated lysine desuccinylation impacts diverse metabolic pathways.</title>
        <authorList>
            <person name="Park J."/>
            <person name="Chen Y."/>
            <person name="Tishkoff D.X."/>
            <person name="Peng C."/>
            <person name="Tan M."/>
            <person name="Dai L."/>
            <person name="Xie Z."/>
            <person name="Zhang Y."/>
            <person name="Zwaans B.M."/>
            <person name="Skinner M.E."/>
            <person name="Lombard D.B."/>
            <person name="Zhao Y."/>
        </authorList>
    </citation>
    <scope>SUCCINYLATION [LARGE SCALE ANALYSIS] AT LYS-66</scope>
    <scope>IDENTIFICATION BY MASS SPECTROMETRY [LARGE SCALE ANALYSIS]</scope>
    <source>
        <tissue>Liver</tissue>
    </source>
</reference>
<evidence type="ECO:0000250" key="1"/>
<evidence type="ECO:0000250" key="2">
    <source>
        <dbReference type="UniProtKB" id="Q00059"/>
    </source>
</evidence>
<evidence type="ECO:0000255" key="3"/>
<evidence type="ECO:0000255" key="4">
    <source>
        <dbReference type="PROSITE-ProRule" id="PRU00267"/>
    </source>
</evidence>
<evidence type="ECO:0000269" key="5">
    <source>
    </source>
</evidence>
<evidence type="ECO:0000269" key="6">
    <source>
    </source>
</evidence>
<evidence type="ECO:0000269" key="7">
    <source>
    </source>
</evidence>
<evidence type="ECO:0000303" key="8">
    <source>
    </source>
</evidence>
<evidence type="ECO:0000305" key="9"/>
<evidence type="ECO:0000312" key="10">
    <source>
        <dbReference type="MGI" id="MGI:107810"/>
    </source>
</evidence>
<evidence type="ECO:0007744" key="11">
    <source>
    </source>
</evidence>
<accession>P40630</accession>
<accession>P97894</accession>
<accession>P97906</accession>
<accession>Q543I8</accession>
<accession>Q9DBM9</accession>
<gene>
    <name evidence="10" type="primary">Tfam</name>
    <name type="synonym">Hmgts</name>
</gene>
<name>TFAM_MOUSE</name>
<proteinExistence type="evidence at protein level"/>
<feature type="transit peptide" description="Mitochondrion" evidence="3">
    <location>
        <begin position="1"/>
        <end position="42"/>
    </location>
</feature>
<feature type="chain" id="PRO_0000013471" description="Transcription factor A, mitochondrial">
    <location>
        <begin position="43"/>
        <end position="243"/>
    </location>
</feature>
<feature type="DNA-binding region" description="HMG box 1" evidence="4">
    <location>
        <begin position="49"/>
        <end position="117"/>
    </location>
</feature>
<feature type="DNA-binding region" description="HMG box 2" evidence="4">
    <location>
        <begin position="154"/>
        <end position="218"/>
    </location>
</feature>
<feature type="site" description="Intercalates between bases and promotes DNA bending" evidence="1">
    <location>
        <position position="57"/>
    </location>
</feature>
<feature type="site" description="Intercalates between bases and promotes DNA bending" evidence="1">
    <location>
        <position position="181"/>
    </location>
</feature>
<feature type="modified residue" description="Phosphoserine; by PKA" evidence="2">
    <location>
        <position position="54"/>
    </location>
</feature>
<feature type="modified residue" description="Phosphoserine; by PKA" evidence="2">
    <location>
        <position position="55"/>
    </location>
</feature>
<feature type="modified residue" description="Phosphoserine; by PKA" evidence="2">
    <location>
        <position position="60"/>
    </location>
</feature>
<feature type="modified residue" description="N6-succinyllysine" evidence="11">
    <location>
        <position position="66"/>
    </location>
</feature>
<feature type="modified residue" description="Phosphothreonine" evidence="2">
    <location>
        <position position="121"/>
    </location>
</feature>
<feature type="modified residue" description="Phosphoserine; by PKA" evidence="2">
    <location>
        <position position="159"/>
    </location>
</feature>
<feature type="modified residue" description="Phosphoserine" evidence="2">
    <location>
        <position position="192"/>
    </location>
</feature>
<feature type="splice variant" id="VSP_002185" description="In isoform Nuclear." evidence="8">
    <location>
        <begin position="1"/>
        <end position="28"/>
    </location>
</feature>
<feature type="splice variant" id="VSP_002186" description="In isoform Nuclear." evidence="8">
    <original>IPSSIS</original>
    <variation>MAGAWG</variation>
    <location>
        <begin position="29"/>
        <end position="34"/>
    </location>
</feature>
<feature type="sequence conflict" description="In Ref. 5; AAA02579." evidence="9" ref="5">
    <original>S</original>
    <variation>R</variation>
    <location>
        <position position="34"/>
    </location>
</feature>